<evidence type="ECO:0000250" key="1"/>
<evidence type="ECO:0000250" key="2">
    <source>
        <dbReference type="UniProtKB" id="P00157"/>
    </source>
</evidence>
<evidence type="ECO:0000255" key="3">
    <source>
        <dbReference type="PROSITE-ProRule" id="PRU00967"/>
    </source>
</evidence>
<evidence type="ECO:0000255" key="4">
    <source>
        <dbReference type="PROSITE-ProRule" id="PRU00968"/>
    </source>
</evidence>
<protein>
    <recommendedName>
        <fullName>Cytochrome b</fullName>
    </recommendedName>
    <alternativeName>
        <fullName>Complex III subunit 3</fullName>
    </alternativeName>
    <alternativeName>
        <fullName>Complex III subunit III</fullName>
    </alternativeName>
    <alternativeName>
        <fullName>Cytochrome b-c1 complex subunit 3</fullName>
    </alternativeName>
    <alternativeName>
        <fullName>Ubiquinol-cytochrome-c reductase complex cytochrome b subunit</fullName>
    </alternativeName>
</protein>
<accession>P41280</accession>
<comment type="function">
    <text evidence="2">Component of the ubiquinol-cytochrome c reductase complex (complex III or cytochrome b-c1 complex) that is part of the mitochondrial respiratory chain. The b-c1 complex mediates electron transfer from ubiquinol to cytochrome c. Contributes to the generation of a proton gradient across the mitochondrial membrane that is then used for ATP synthesis.</text>
</comment>
<comment type="cofactor">
    <cofactor evidence="2">
        <name>heme b</name>
        <dbReference type="ChEBI" id="CHEBI:60344"/>
    </cofactor>
    <text evidence="2">Binds 2 heme b groups non-covalently.</text>
</comment>
<comment type="subunit">
    <text evidence="2">The cytochrome bc1 complex contains 11 subunits: 3 respiratory subunits (MT-CYB, CYC1 and UQCRFS1), 2 core proteins (UQCRC1 and UQCRC2) and 6 low-molecular weight proteins (UQCRH/QCR6, UQCRB/QCR7, UQCRQ/QCR8, UQCR10/QCR9, UQCR11/QCR10 and a cleavage product of UQCRFS1). This cytochrome bc1 complex then forms a dimer.</text>
</comment>
<comment type="subcellular location">
    <subcellularLocation>
        <location evidence="2">Mitochondrion inner membrane</location>
        <topology evidence="2">Multi-pass membrane protein</topology>
    </subcellularLocation>
</comment>
<comment type="miscellaneous">
    <text evidence="1">Heme 1 (or BL or b562) is low-potential and absorbs at about 562 nm, and heme 2 (or BH or b566) is high-potential and absorbs at about 566 nm.</text>
</comment>
<comment type="similarity">
    <text evidence="3 4">Belongs to the cytochrome b family.</text>
</comment>
<comment type="caution">
    <text evidence="2">The full-length protein contains only eight transmembrane helices, not nine as predicted by bioinformatics tools.</text>
</comment>
<name>CYB_BALAC</name>
<reference key="1">
    <citation type="journal article" date="1994" name="Nature">
        <title>Relationship of baleen whales established by cytochrome b gene sequence comparison.</title>
        <authorList>
            <person name="Arnason U."/>
            <person name="Gullberg A."/>
        </authorList>
    </citation>
    <scope>NUCLEOTIDE SEQUENCE [GENOMIC DNA]</scope>
</reference>
<sequence length="379" mass="42624">MTNIRKTHPLMKIINDAFIDLPTPSNISSWWNFGSLLGLCLIVQILTGLFLAMHYTPDTTTAFSSVTHICRDVNYGWIIRYLHANGASMFFICLYAHMGAGLYYGSHAFRETWNIGVILLFTIMATAFVGYVLPWGQMSFWGATVITNLLSAIPYIGTTLVEWIWGGFSVDKATLTRFFAFHFILPFIILALAIVHLIFLHETGSNNPTGIPSDMDKIPFHPYYTIKDILGALLLILTLLALTLFAPDLLGDPDNYTPANPLSTPAHIKPEWYFLFAYAILRSIPNKLGGVLALLLSILILAFIPMLHTSKQRSMMFRPFSQSLFWVLVADLLTLTWIGGQPVEHPYMIVGQLASILYFLLILVLMPVASLIENKLMKW</sequence>
<gene>
    <name type="primary">MT-CYB</name>
    <name type="synonym">COB</name>
    <name type="synonym">CYTB</name>
    <name type="synonym">MTCYB</name>
</gene>
<geneLocation type="mitochondrion"/>
<proteinExistence type="inferred from homology"/>
<organism>
    <name type="scientific">Balaenoptera acutorostrata</name>
    <name type="common">Common minke whale</name>
    <name type="synonym">Balaena rostrata</name>
    <dbReference type="NCBI Taxonomy" id="9767"/>
    <lineage>
        <taxon>Eukaryota</taxon>
        <taxon>Metazoa</taxon>
        <taxon>Chordata</taxon>
        <taxon>Craniata</taxon>
        <taxon>Vertebrata</taxon>
        <taxon>Euteleostomi</taxon>
        <taxon>Mammalia</taxon>
        <taxon>Eutheria</taxon>
        <taxon>Laurasiatheria</taxon>
        <taxon>Artiodactyla</taxon>
        <taxon>Whippomorpha</taxon>
        <taxon>Cetacea</taxon>
        <taxon>Mysticeti</taxon>
        <taxon>Balaenopteridae</taxon>
        <taxon>Balaenoptera</taxon>
    </lineage>
</organism>
<keyword id="KW-0249">Electron transport</keyword>
<keyword id="KW-0349">Heme</keyword>
<keyword id="KW-0408">Iron</keyword>
<keyword id="KW-0472">Membrane</keyword>
<keyword id="KW-0479">Metal-binding</keyword>
<keyword id="KW-0496">Mitochondrion</keyword>
<keyword id="KW-0999">Mitochondrion inner membrane</keyword>
<keyword id="KW-0679">Respiratory chain</keyword>
<keyword id="KW-0812">Transmembrane</keyword>
<keyword id="KW-1133">Transmembrane helix</keyword>
<keyword id="KW-0813">Transport</keyword>
<keyword id="KW-0830">Ubiquinone</keyword>
<feature type="chain" id="PRO_0000060657" description="Cytochrome b">
    <location>
        <begin position="1"/>
        <end position="379"/>
    </location>
</feature>
<feature type="transmembrane region" description="Helical" evidence="2">
    <location>
        <begin position="33"/>
        <end position="53"/>
    </location>
</feature>
<feature type="transmembrane region" description="Helical" evidence="2">
    <location>
        <begin position="77"/>
        <end position="98"/>
    </location>
</feature>
<feature type="transmembrane region" description="Helical" evidence="2">
    <location>
        <begin position="113"/>
        <end position="133"/>
    </location>
</feature>
<feature type="transmembrane region" description="Helical" evidence="2">
    <location>
        <begin position="178"/>
        <end position="198"/>
    </location>
</feature>
<feature type="transmembrane region" description="Helical" evidence="2">
    <location>
        <begin position="226"/>
        <end position="246"/>
    </location>
</feature>
<feature type="transmembrane region" description="Helical" evidence="2">
    <location>
        <begin position="288"/>
        <end position="308"/>
    </location>
</feature>
<feature type="transmembrane region" description="Helical" evidence="2">
    <location>
        <begin position="320"/>
        <end position="340"/>
    </location>
</feature>
<feature type="transmembrane region" description="Helical" evidence="2">
    <location>
        <begin position="347"/>
        <end position="367"/>
    </location>
</feature>
<feature type="binding site" description="axial binding residue" evidence="2">
    <location>
        <position position="83"/>
    </location>
    <ligand>
        <name>heme b</name>
        <dbReference type="ChEBI" id="CHEBI:60344"/>
        <label>b562</label>
    </ligand>
    <ligandPart>
        <name>Fe</name>
        <dbReference type="ChEBI" id="CHEBI:18248"/>
    </ligandPart>
</feature>
<feature type="binding site" description="axial binding residue" evidence="2">
    <location>
        <position position="97"/>
    </location>
    <ligand>
        <name>heme b</name>
        <dbReference type="ChEBI" id="CHEBI:60344"/>
        <label>b566</label>
    </ligand>
    <ligandPart>
        <name>Fe</name>
        <dbReference type="ChEBI" id="CHEBI:18248"/>
    </ligandPart>
</feature>
<feature type="binding site" description="axial binding residue" evidence="2">
    <location>
        <position position="182"/>
    </location>
    <ligand>
        <name>heme b</name>
        <dbReference type="ChEBI" id="CHEBI:60344"/>
        <label>b562</label>
    </ligand>
    <ligandPart>
        <name>Fe</name>
        <dbReference type="ChEBI" id="CHEBI:18248"/>
    </ligandPart>
</feature>
<feature type="binding site" description="axial binding residue" evidence="2">
    <location>
        <position position="196"/>
    </location>
    <ligand>
        <name>heme b</name>
        <dbReference type="ChEBI" id="CHEBI:60344"/>
        <label>b566</label>
    </ligand>
    <ligandPart>
        <name>Fe</name>
        <dbReference type="ChEBI" id="CHEBI:18248"/>
    </ligandPart>
</feature>
<feature type="binding site" evidence="2">
    <location>
        <position position="201"/>
    </location>
    <ligand>
        <name>a ubiquinone</name>
        <dbReference type="ChEBI" id="CHEBI:16389"/>
    </ligand>
</feature>
<dbReference type="EMBL" id="X75753">
    <property type="protein sequence ID" value="CAA53381.1"/>
    <property type="molecule type" value="Genomic_DNA"/>
</dbReference>
<dbReference type="PIR" id="S43261">
    <property type="entry name" value="S43261"/>
</dbReference>
<dbReference type="RefSeq" id="NP_944658.1">
    <property type="nucleotide sequence ID" value="NC_005271.1"/>
</dbReference>
<dbReference type="SMR" id="P41280"/>
<dbReference type="GeneID" id="2658512"/>
<dbReference type="CTD" id="4519"/>
<dbReference type="GO" id="GO:0005743">
    <property type="term" value="C:mitochondrial inner membrane"/>
    <property type="evidence" value="ECO:0007669"/>
    <property type="project" value="UniProtKB-SubCell"/>
</dbReference>
<dbReference type="GO" id="GO:0045275">
    <property type="term" value="C:respiratory chain complex III"/>
    <property type="evidence" value="ECO:0007669"/>
    <property type="project" value="InterPro"/>
</dbReference>
<dbReference type="GO" id="GO:0046872">
    <property type="term" value="F:metal ion binding"/>
    <property type="evidence" value="ECO:0007669"/>
    <property type="project" value="UniProtKB-KW"/>
</dbReference>
<dbReference type="GO" id="GO:0008121">
    <property type="term" value="F:ubiquinol-cytochrome-c reductase activity"/>
    <property type="evidence" value="ECO:0007669"/>
    <property type="project" value="InterPro"/>
</dbReference>
<dbReference type="GO" id="GO:0006122">
    <property type="term" value="P:mitochondrial electron transport, ubiquinol to cytochrome c"/>
    <property type="evidence" value="ECO:0007669"/>
    <property type="project" value="TreeGrafter"/>
</dbReference>
<dbReference type="CDD" id="cd00290">
    <property type="entry name" value="cytochrome_b_C"/>
    <property type="match status" value="1"/>
</dbReference>
<dbReference type="CDD" id="cd00284">
    <property type="entry name" value="Cytochrome_b_N"/>
    <property type="match status" value="1"/>
</dbReference>
<dbReference type="FunFam" id="1.20.810.10:FF:000002">
    <property type="entry name" value="Cytochrome b"/>
    <property type="match status" value="1"/>
</dbReference>
<dbReference type="Gene3D" id="1.20.810.10">
    <property type="entry name" value="Cytochrome Bc1 Complex, Chain C"/>
    <property type="match status" value="1"/>
</dbReference>
<dbReference type="InterPro" id="IPR005798">
    <property type="entry name" value="Cyt_b/b6_C"/>
</dbReference>
<dbReference type="InterPro" id="IPR036150">
    <property type="entry name" value="Cyt_b/b6_C_sf"/>
</dbReference>
<dbReference type="InterPro" id="IPR005797">
    <property type="entry name" value="Cyt_b/b6_N"/>
</dbReference>
<dbReference type="InterPro" id="IPR027387">
    <property type="entry name" value="Cytb/b6-like_sf"/>
</dbReference>
<dbReference type="InterPro" id="IPR030689">
    <property type="entry name" value="Cytochrome_b"/>
</dbReference>
<dbReference type="InterPro" id="IPR048260">
    <property type="entry name" value="Cytochrome_b_C_euk/bac"/>
</dbReference>
<dbReference type="InterPro" id="IPR048259">
    <property type="entry name" value="Cytochrome_b_N_euk/bac"/>
</dbReference>
<dbReference type="InterPro" id="IPR016174">
    <property type="entry name" value="Di-haem_cyt_TM"/>
</dbReference>
<dbReference type="PANTHER" id="PTHR19271">
    <property type="entry name" value="CYTOCHROME B"/>
    <property type="match status" value="1"/>
</dbReference>
<dbReference type="PANTHER" id="PTHR19271:SF16">
    <property type="entry name" value="CYTOCHROME B"/>
    <property type="match status" value="1"/>
</dbReference>
<dbReference type="Pfam" id="PF00032">
    <property type="entry name" value="Cytochrom_B_C"/>
    <property type="match status" value="1"/>
</dbReference>
<dbReference type="Pfam" id="PF00033">
    <property type="entry name" value="Cytochrome_B"/>
    <property type="match status" value="1"/>
</dbReference>
<dbReference type="PIRSF" id="PIRSF038885">
    <property type="entry name" value="COB"/>
    <property type="match status" value="1"/>
</dbReference>
<dbReference type="SUPFAM" id="SSF81648">
    <property type="entry name" value="a domain/subunit of cytochrome bc1 complex (Ubiquinol-cytochrome c reductase)"/>
    <property type="match status" value="1"/>
</dbReference>
<dbReference type="SUPFAM" id="SSF81342">
    <property type="entry name" value="Transmembrane di-heme cytochromes"/>
    <property type="match status" value="1"/>
</dbReference>
<dbReference type="PROSITE" id="PS51003">
    <property type="entry name" value="CYTB_CTER"/>
    <property type="match status" value="1"/>
</dbReference>
<dbReference type="PROSITE" id="PS51002">
    <property type="entry name" value="CYTB_NTER"/>
    <property type="match status" value="1"/>
</dbReference>